<accession>Q9CA89</accession>
<reference key="1">
    <citation type="journal article" date="2000" name="Nature">
        <title>Sequence and analysis of chromosome 1 of the plant Arabidopsis thaliana.</title>
        <authorList>
            <person name="Theologis A."/>
            <person name="Ecker J.R."/>
            <person name="Palm C.J."/>
            <person name="Federspiel N.A."/>
            <person name="Kaul S."/>
            <person name="White O."/>
            <person name="Alonso J."/>
            <person name="Altafi H."/>
            <person name="Araujo R."/>
            <person name="Bowman C.L."/>
            <person name="Brooks S.Y."/>
            <person name="Buehler E."/>
            <person name="Chan A."/>
            <person name="Chao Q."/>
            <person name="Chen H."/>
            <person name="Cheuk R.F."/>
            <person name="Chin C.W."/>
            <person name="Chung M.K."/>
            <person name="Conn L."/>
            <person name="Conway A.B."/>
            <person name="Conway A.R."/>
            <person name="Creasy T.H."/>
            <person name="Dewar K."/>
            <person name="Dunn P."/>
            <person name="Etgu P."/>
            <person name="Feldblyum T.V."/>
            <person name="Feng J.-D."/>
            <person name="Fong B."/>
            <person name="Fujii C.Y."/>
            <person name="Gill J.E."/>
            <person name="Goldsmith A.D."/>
            <person name="Haas B."/>
            <person name="Hansen N.F."/>
            <person name="Hughes B."/>
            <person name="Huizar L."/>
            <person name="Hunter J.L."/>
            <person name="Jenkins J."/>
            <person name="Johnson-Hopson C."/>
            <person name="Khan S."/>
            <person name="Khaykin E."/>
            <person name="Kim C.J."/>
            <person name="Koo H.L."/>
            <person name="Kremenetskaia I."/>
            <person name="Kurtz D.B."/>
            <person name="Kwan A."/>
            <person name="Lam B."/>
            <person name="Langin-Hooper S."/>
            <person name="Lee A."/>
            <person name="Lee J.M."/>
            <person name="Lenz C.A."/>
            <person name="Li J.H."/>
            <person name="Li Y.-P."/>
            <person name="Lin X."/>
            <person name="Liu S.X."/>
            <person name="Liu Z.A."/>
            <person name="Luros J.S."/>
            <person name="Maiti R."/>
            <person name="Marziali A."/>
            <person name="Militscher J."/>
            <person name="Miranda M."/>
            <person name="Nguyen M."/>
            <person name="Nierman W.C."/>
            <person name="Osborne B.I."/>
            <person name="Pai G."/>
            <person name="Peterson J."/>
            <person name="Pham P.K."/>
            <person name="Rizzo M."/>
            <person name="Rooney T."/>
            <person name="Rowley D."/>
            <person name="Sakano H."/>
            <person name="Salzberg S.L."/>
            <person name="Schwartz J.R."/>
            <person name="Shinn P."/>
            <person name="Southwick A.M."/>
            <person name="Sun H."/>
            <person name="Tallon L.J."/>
            <person name="Tambunga G."/>
            <person name="Toriumi M.J."/>
            <person name="Town C.D."/>
            <person name="Utterback T."/>
            <person name="Van Aken S."/>
            <person name="Vaysberg M."/>
            <person name="Vysotskaia V.S."/>
            <person name="Walker M."/>
            <person name="Wu D."/>
            <person name="Yu G."/>
            <person name="Fraser C.M."/>
            <person name="Venter J.C."/>
            <person name="Davis R.W."/>
        </authorList>
    </citation>
    <scope>NUCLEOTIDE SEQUENCE [LARGE SCALE GENOMIC DNA]</scope>
    <source>
        <strain>cv. Columbia</strain>
    </source>
</reference>
<reference key="2">
    <citation type="journal article" date="2017" name="Plant J.">
        <title>Araport11: a complete reannotation of the Arabidopsis thaliana reference genome.</title>
        <authorList>
            <person name="Cheng C.Y."/>
            <person name="Krishnakumar V."/>
            <person name="Chan A.P."/>
            <person name="Thibaud-Nissen F."/>
            <person name="Schobel S."/>
            <person name="Town C.D."/>
        </authorList>
    </citation>
    <scope>GENOME REANNOTATION</scope>
    <source>
        <strain>cv. Columbia</strain>
    </source>
</reference>
<reference key="3">
    <citation type="submission" date="2008-06" db="EMBL/GenBank/DDBJ databases">
        <title>Arabidopsis ORF clones.</title>
        <authorList>
            <person name="De Los Reyes C."/>
            <person name="Quan R."/>
            <person name="Chen H."/>
            <person name="Bautista V.R."/>
            <person name="Kim C.J."/>
            <person name="Ecker J.R."/>
        </authorList>
    </citation>
    <scope>NUCLEOTIDE SEQUENCE [LARGE SCALE MRNA]</scope>
    <source>
        <strain>cv. Columbia</strain>
    </source>
</reference>
<reference key="4">
    <citation type="journal article" date="2006" name="Plant Cell">
        <title>Members of a novel class of Arabidopsis Rho guanine nucleotide exchange factors control Rho GTPase-dependent polar growth.</title>
        <authorList>
            <person name="Gu Y."/>
            <person name="Li S."/>
            <person name="Lord E.M."/>
            <person name="Yang Z."/>
        </authorList>
    </citation>
    <scope>TISSUE SPECIFICITY</scope>
</reference>
<reference key="5">
    <citation type="journal article" date="2005" name="Nature">
        <title>A new family of RhoGEFs activates the Rop molecular switch in plants.</title>
        <authorList>
            <person name="Berken A."/>
            <person name="Thomas C."/>
            <person name="Wittinghofer A."/>
        </authorList>
    </citation>
    <scope>GENE FAMILY</scope>
</reference>
<reference key="6">
    <citation type="journal article" date="2007" name="Proc. Natl. Acad. Sci. U.S.A.">
        <title>A distinct mechanism regulating a pollen-specific guanine nucleotide exchange factor for the small GTPase Rop in Arabidopsis thaliana.</title>
        <authorList>
            <person name="Zhang Y."/>
            <person name="McCormick S."/>
        </authorList>
    </citation>
    <scope>FUNCTION</scope>
    <scope>ACTIVITY REGULATION</scope>
    <scope>INTERACTION WITH PRK2</scope>
    <scope>MUTAGENESIS OF THR-458; SER-500 AND SER-510</scope>
    <scope>TISSUE SPECIFICITY</scope>
    <scope>SUBCELLULAR LOCATION</scope>
</reference>
<reference key="7">
    <citation type="journal article" date="2016" name="Nature">
        <title>Tip-localized receptors control pollen tube growth and LURE sensing in Arabidopsis.</title>
        <authorList>
            <person name="Takeuchi H."/>
            <person name="Higashiyama T."/>
        </authorList>
    </citation>
    <scope>INTERACTION WITH PRK6</scope>
</reference>
<protein>
    <recommendedName>
        <fullName evidence="7">Rop guanine nucleotide exchange factor 12</fullName>
        <shortName evidence="7">AtRopGEF12</shortName>
    </recommendedName>
    <alternativeName>
        <fullName>Protein MATERNAL EFFECT EMBRYO ARREST 64</fullName>
    </alternativeName>
    <alternativeName>
        <fullName evidence="7">Rho of plants guanine nucleotide exchange factor 12</fullName>
    </alternativeName>
</protein>
<feature type="chain" id="PRO_0000423897" description="Rop guanine nucleotide exchange factor 12">
    <location>
        <begin position="1"/>
        <end position="515"/>
    </location>
</feature>
<feature type="domain" description="PRONE" evidence="3">
    <location>
        <begin position="83"/>
        <end position="446"/>
    </location>
</feature>
<feature type="modified residue" description="Phosphoserine" evidence="2">
    <location>
        <position position="510"/>
    </location>
</feature>
<feature type="mutagenesis site" description="No effect on pollen tube growth." evidence="5">
    <original>T</original>
    <variation>A</variation>
    <variation>D</variation>
    <location>
        <position position="458"/>
    </location>
</feature>
<feature type="mutagenesis site" description="No effect on pollen tube growth." evidence="5">
    <original>S</original>
    <variation>A</variation>
    <variation>D</variation>
    <location>
        <position position="500"/>
    </location>
</feature>
<feature type="mutagenesis site" description="No effect on pollen tube growth." evidence="5">
    <original>S</original>
    <variation>A</variation>
    <location>
        <position position="510"/>
    </location>
</feature>
<feature type="mutagenesis site" description="Increased pollen tube growth." evidence="5">
    <original>S</original>
    <variation>D</variation>
    <location>
        <position position="510"/>
    </location>
</feature>
<proteinExistence type="evidence at protein level"/>
<gene>
    <name evidence="7" type="primary">ROPGEF12</name>
    <name type="synonym">MEEA64</name>
    <name evidence="9" type="ordered locus">At1g79860</name>
    <name evidence="10" type="ORF">F19K16.18</name>
</gene>
<sequence length="515" mass="58045">MVRASEQEQETYRSRLFNFKWRNNDNNSATRHNKSLSVETGLDEAATGSHDAEPLTIIHPSQGPPLSRSAADEAVLAALAASQARERQLLADMEQMKERFSKLLLGEDNSGGGKGVSSALALSNAITNLAASVFGEQRRLEPMPAERRARWRKEIDWLLSVTDYVVEFAPSQQKNKDGTNMEIMTTRQRTDLHMNIPALKKLDAMLIDCLENFKDQSEFSYISKDSPDLDGKRNDEKWWIPTVKVPPDGLSEASRRFLQYQKDCVNQVLKAAMAINAQVLFEMEIPESYIDSLPKNGRASLGDQMYKNITVDFFDPDQFLSSMDMSSEHKIVDLKNRIEASIIIWKRKMVYKDNKSSAPWASGVSLEKREVFEERAETILLILKQRYPGISQSSLDISKIQFNEDVGQAVLESYSRILESLAYTVLSRIDDVLEADRAGNKRNTPLEAEEETLVGSMTLSDFMGWDFDQAANAELESKKDLPDDPLIKEKLSVVTTKKTSYLETLGGVKSPTARH</sequence>
<name>ROGFC_ARATH</name>
<comment type="function">
    <text evidence="5">Guanine-nucleotide exchange factor (GEF) that acts as an activator of Rop (Rho of plants) GTPases by promoting the exchange of GDP for GTP. May be recruited by PRK2 at the plasma membrane to maintain polar Rop activity in the pollen tube and control polarized pollen tube growth.</text>
</comment>
<comment type="activity regulation">
    <text evidence="8">Phosphorylation at Ser-510 by PRK2 may release ROPGEF12 auto-inhibition, thereby activating ROPGEF12 and downstream Rop signaling.</text>
</comment>
<comment type="subunit">
    <text evidence="5 6">Interacts (via C-terminus) with PRK2. Interacts with PRK6 (PubMed:26961657).</text>
</comment>
<comment type="subcellular location">
    <subcellularLocation>
        <location>Cytoplasm</location>
    </subcellularLocation>
    <subcellularLocation>
        <location evidence="5">Cell membrane</location>
    </subcellularLocation>
    <text evidence="5">ROPGEF12 colocalizes with PRK2 at the apical plasma membrane of pollen tube.</text>
</comment>
<comment type="tissue specificity">
    <text evidence="4 5">Expressed in pollen grains.</text>
</comment>
<comment type="domain">
    <text evidence="1">The PRONE (plant-specific Rop nucleotide exchanger) domain is responsible for the GEF activity.</text>
</comment>
<organism>
    <name type="scientific">Arabidopsis thaliana</name>
    <name type="common">Mouse-ear cress</name>
    <dbReference type="NCBI Taxonomy" id="3702"/>
    <lineage>
        <taxon>Eukaryota</taxon>
        <taxon>Viridiplantae</taxon>
        <taxon>Streptophyta</taxon>
        <taxon>Embryophyta</taxon>
        <taxon>Tracheophyta</taxon>
        <taxon>Spermatophyta</taxon>
        <taxon>Magnoliopsida</taxon>
        <taxon>eudicotyledons</taxon>
        <taxon>Gunneridae</taxon>
        <taxon>Pentapetalae</taxon>
        <taxon>rosids</taxon>
        <taxon>malvids</taxon>
        <taxon>Brassicales</taxon>
        <taxon>Brassicaceae</taxon>
        <taxon>Camelineae</taxon>
        <taxon>Arabidopsis</taxon>
    </lineage>
</organism>
<dbReference type="EMBL" id="AC011717">
    <property type="protein sequence ID" value="AAG52233.1"/>
    <property type="molecule type" value="Genomic_DNA"/>
</dbReference>
<dbReference type="EMBL" id="CP002684">
    <property type="protein sequence ID" value="AEE36314.1"/>
    <property type="molecule type" value="Genomic_DNA"/>
</dbReference>
<dbReference type="EMBL" id="BT033042">
    <property type="protein sequence ID" value="ACE79744.1"/>
    <property type="molecule type" value="mRNA"/>
</dbReference>
<dbReference type="PIR" id="F96829">
    <property type="entry name" value="F96829"/>
</dbReference>
<dbReference type="RefSeq" id="NP_178104.1">
    <property type="nucleotide sequence ID" value="NM_106635.4"/>
</dbReference>
<dbReference type="SMR" id="Q9CA89"/>
<dbReference type="BioGRID" id="29543">
    <property type="interactions" value="1"/>
</dbReference>
<dbReference type="DIP" id="DIP-46186N"/>
<dbReference type="FunCoup" id="Q9CA89">
    <property type="interactions" value="52"/>
</dbReference>
<dbReference type="IntAct" id="Q9CA89">
    <property type="interactions" value="1"/>
</dbReference>
<dbReference type="STRING" id="3702.Q9CA89"/>
<dbReference type="PaxDb" id="3702-AT1G79860.1"/>
<dbReference type="ProteomicsDB" id="228073"/>
<dbReference type="EnsemblPlants" id="AT1G79860.1">
    <property type="protein sequence ID" value="AT1G79860.1"/>
    <property type="gene ID" value="AT1G79860"/>
</dbReference>
<dbReference type="GeneID" id="844325"/>
<dbReference type="Gramene" id="AT1G79860.1">
    <property type="protein sequence ID" value="AT1G79860.1"/>
    <property type="gene ID" value="AT1G79860"/>
</dbReference>
<dbReference type="KEGG" id="ath:AT1G79860"/>
<dbReference type="Araport" id="AT1G79860"/>
<dbReference type="TAIR" id="AT1G79860">
    <property type="gene designation" value="ROPGEF12"/>
</dbReference>
<dbReference type="eggNOG" id="ENOG502QSGR">
    <property type="taxonomic scope" value="Eukaryota"/>
</dbReference>
<dbReference type="HOGENOM" id="CLU_019073_1_0_1"/>
<dbReference type="InParanoid" id="Q9CA89"/>
<dbReference type="OMA" id="NVIMEMD"/>
<dbReference type="PhylomeDB" id="Q9CA89"/>
<dbReference type="PRO" id="PR:Q9CA89"/>
<dbReference type="Proteomes" id="UP000006548">
    <property type="component" value="Chromosome 1"/>
</dbReference>
<dbReference type="ExpressionAtlas" id="Q9CA89">
    <property type="expression patterns" value="baseline and differential"/>
</dbReference>
<dbReference type="GO" id="GO:0005737">
    <property type="term" value="C:cytoplasm"/>
    <property type="evidence" value="ECO:0007669"/>
    <property type="project" value="UniProtKB-SubCell"/>
</dbReference>
<dbReference type="GO" id="GO:0005886">
    <property type="term" value="C:plasma membrane"/>
    <property type="evidence" value="ECO:0000314"/>
    <property type="project" value="TAIR"/>
</dbReference>
<dbReference type="GO" id="GO:0090406">
    <property type="term" value="C:pollen tube"/>
    <property type="evidence" value="ECO:0000314"/>
    <property type="project" value="TAIR"/>
</dbReference>
<dbReference type="GO" id="GO:0005085">
    <property type="term" value="F:guanyl-nucleotide exchange factor activity"/>
    <property type="evidence" value="ECO:0000250"/>
    <property type="project" value="TAIR"/>
</dbReference>
<dbReference type="GO" id="GO:0009793">
    <property type="term" value="P:embryo development ending in seed dormancy"/>
    <property type="evidence" value="ECO:0000315"/>
    <property type="project" value="TAIR"/>
</dbReference>
<dbReference type="GO" id="GO:0009860">
    <property type="term" value="P:pollen tube growth"/>
    <property type="evidence" value="ECO:0000270"/>
    <property type="project" value="TAIR"/>
</dbReference>
<dbReference type="GO" id="GO:0080092">
    <property type="term" value="P:regulation of pollen tube growth"/>
    <property type="evidence" value="ECO:0000316"/>
    <property type="project" value="TAIR"/>
</dbReference>
<dbReference type="FunFam" id="1.20.58.2010:FF:000001">
    <property type="entry name" value="Rop guanine nucleotide exchange factor 14"/>
    <property type="match status" value="1"/>
</dbReference>
<dbReference type="FunFam" id="1.20.58.2010:FF:000003">
    <property type="entry name" value="Rop guanine nucleotide exchange factor 14"/>
    <property type="match status" value="1"/>
</dbReference>
<dbReference type="FunFam" id="1.20.58.1310:FF:000001">
    <property type="entry name" value="Rop guanine nucleotide exchange factor 9"/>
    <property type="match status" value="1"/>
</dbReference>
<dbReference type="Gene3D" id="1.20.58.2010">
    <property type="entry name" value="PRONE domain, subdomain 1"/>
    <property type="match status" value="1"/>
</dbReference>
<dbReference type="Gene3D" id="1.20.58.1310">
    <property type="entry name" value="PRONE domain, subdomain 2"/>
    <property type="match status" value="1"/>
</dbReference>
<dbReference type="InterPro" id="IPR005512">
    <property type="entry name" value="PRONE_dom"/>
</dbReference>
<dbReference type="InterPro" id="IPR038937">
    <property type="entry name" value="RopGEF"/>
</dbReference>
<dbReference type="PANTHER" id="PTHR33101">
    <property type="entry name" value="ROP GUANINE NUCLEOTIDE EXCHANGE FACTOR 1"/>
    <property type="match status" value="1"/>
</dbReference>
<dbReference type="PANTHER" id="PTHR33101:SF10">
    <property type="entry name" value="ROP GUANINE NUCLEOTIDE EXCHANGE FACTOR 12"/>
    <property type="match status" value="1"/>
</dbReference>
<dbReference type="Pfam" id="PF03759">
    <property type="entry name" value="PRONE"/>
    <property type="match status" value="1"/>
</dbReference>
<dbReference type="PROSITE" id="PS51334">
    <property type="entry name" value="PRONE"/>
    <property type="match status" value="1"/>
</dbReference>
<keyword id="KW-1003">Cell membrane</keyword>
<keyword id="KW-0963">Cytoplasm</keyword>
<keyword id="KW-0344">Guanine-nucleotide releasing factor</keyword>
<keyword id="KW-0472">Membrane</keyword>
<keyword id="KW-0597">Phosphoprotein</keyword>
<keyword id="KW-1185">Reference proteome</keyword>
<evidence type="ECO:0000250" key="1"/>
<evidence type="ECO:0000255" key="2"/>
<evidence type="ECO:0000255" key="3">
    <source>
        <dbReference type="PROSITE-ProRule" id="PRU00663"/>
    </source>
</evidence>
<evidence type="ECO:0000269" key="4">
    <source>
    </source>
</evidence>
<evidence type="ECO:0000269" key="5">
    <source>
    </source>
</evidence>
<evidence type="ECO:0000269" key="6">
    <source>
    </source>
</evidence>
<evidence type="ECO:0000303" key="7">
    <source>
    </source>
</evidence>
<evidence type="ECO:0000305" key="8">
    <source>
    </source>
</evidence>
<evidence type="ECO:0000312" key="9">
    <source>
        <dbReference type="Araport" id="AT1G79860"/>
    </source>
</evidence>
<evidence type="ECO:0000312" key="10">
    <source>
        <dbReference type="EMBL" id="AAG52233.1"/>
    </source>
</evidence>